<feature type="transit peptide" description="Mitochondrion" evidence="3">
    <location>
        <begin position="1"/>
        <end status="unknown"/>
    </location>
</feature>
<feature type="chain" id="PRO_0000405775" description="Ornithine carbamoyltransferase, mitochondrial">
    <location>
        <begin status="unknown"/>
        <end position="349"/>
    </location>
</feature>
<feature type="active site" description="Proton acceptor" evidence="2">
    <location>
        <position position="303"/>
    </location>
</feature>
<feature type="binding site" evidence="2">
    <location>
        <begin position="73"/>
        <end position="76"/>
    </location>
    <ligand>
        <name>carbamoyl phosphate</name>
        <dbReference type="ChEBI" id="CHEBI:58228"/>
    </ligand>
</feature>
<feature type="binding site" evidence="2">
    <location>
        <position position="124"/>
    </location>
    <ligand>
        <name>carbamoyl phosphate</name>
        <dbReference type="ChEBI" id="CHEBI:58228"/>
    </ligand>
</feature>
<feature type="binding site" evidence="2">
    <location>
        <position position="151"/>
    </location>
    <ligand>
        <name>carbamoyl phosphate</name>
        <dbReference type="ChEBI" id="CHEBI:58228"/>
    </ligand>
</feature>
<feature type="binding site" evidence="2">
    <location>
        <position position="154"/>
    </location>
    <ligand>
        <name>carbamoyl phosphate</name>
        <dbReference type="ChEBI" id="CHEBI:58228"/>
    </ligand>
</feature>
<feature type="binding site" evidence="2">
    <location>
        <position position="195"/>
    </location>
    <ligand>
        <name>L-ornithine</name>
        <dbReference type="ChEBI" id="CHEBI:46911"/>
    </ligand>
</feature>
<feature type="binding site" evidence="2">
    <location>
        <position position="261"/>
    </location>
    <ligand>
        <name>L-ornithine</name>
        <dbReference type="ChEBI" id="CHEBI:46911"/>
    </ligand>
</feature>
<feature type="binding site" evidence="2">
    <location>
        <position position="265"/>
    </location>
    <ligand>
        <name>L-ornithine</name>
        <dbReference type="ChEBI" id="CHEBI:46911"/>
    </ligand>
</feature>
<feature type="binding site" evidence="2">
    <location>
        <position position="266"/>
    </location>
    <ligand>
        <name>L-ornithine</name>
        <dbReference type="ChEBI" id="CHEBI:46911"/>
    </ligand>
</feature>
<feature type="binding site" evidence="2">
    <location>
        <begin position="303"/>
        <end position="304"/>
    </location>
    <ligand>
        <name>carbamoyl phosphate</name>
        <dbReference type="ChEBI" id="CHEBI:58228"/>
    </ligand>
</feature>
<feature type="binding site" evidence="2">
    <location>
        <position position="330"/>
    </location>
    <ligand>
        <name>carbamoyl phosphate</name>
        <dbReference type="ChEBI" id="CHEBI:58228"/>
    </ligand>
</feature>
<feature type="helix" evidence="5">
    <location>
        <begin position="25"/>
        <end position="27"/>
    </location>
</feature>
<feature type="helix" evidence="5">
    <location>
        <begin position="30"/>
        <end position="47"/>
    </location>
</feature>
<feature type="turn" evidence="5">
    <location>
        <begin position="48"/>
        <end position="50"/>
    </location>
</feature>
<feature type="strand" evidence="5">
    <location>
        <begin position="51"/>
        <end position="53"/>
    </location>
</feature>
<feature type="helix" evidence="5">
    <location>
        <begin position="54"/>
        <end position="56"/>
    </location>
</feature>
<feature type="turn" evidence="5">
    <location>
        <begin position="57"/>
        <end position="62"/>
    </location>
</feature>
<feature type="strand" evidence="5">
    <location>
        <begin position="64"/>
        <end position="71"/>
    </location>
</feature>
<feature type="helix" evidence="5">
    <location>
        <begin position="74"/>
        <end position="86"/>
    </location>
</feature>
<feature type="strand" evidence="5">
    <location>
        <begin position="90"/>
        <end position="94"/>
    </location>
</feature>
<feature type="turn" evidence="5">
    <location>
        <begin position="96"/>
        <end position="98"/>
    </location>
</feature>
<feature type="helix" evidence="5">
    <location>
        <begin position="107"/>
        <end position="115"/>
    </location>
</feature>
<feature type="strand" evidence="5">
    <location>
        <begin position="119"/>
        <end position="124"/>
    </location>
</feature>
<feature type="helix" evidence="5">
    <location>
        <begin position="128"/>
        <end position="137"/>
    </location>
</feature>
<feature type="strand" evidence="5">
    <location>
        <begin position="142"/>
        <end position="146"/>
    </location>
</feature>
<feature type="helix" evidence="5">
    <location>
        <begin position="152"/>
        <end position="165"/>
    </location>
</feature>
<feature type="strand" evidence="5">
    <location>
        <begin position="186"/>
        <end position="191"/>
    </location>
</feature>
<feature type="helix" evidence="5">
    <location>
        <begin position="195"/>
        <end position="206"/>
    </location>
</feature>
<feature type="strand" evidence="5">
    <location>
        <begin position="210"/>
        <end position="214"/>
    </location>
</feature>
<feature type="helix" evidence="5">
    <location>
        <begin position="223"/>
        <end position="233"/>
    </location>
</feature>
<feature type="strand" evidence="5">
    <location>
        <begin position="242"/>
        <end position="246"/>
    </location>
</feature>
<feature type="helix" evidence="5">
    <location>
        <begin position="248"/>
        <end position="251"/>
    </location>
</feature>
<feature type="turn" evidence="5">
    <location>
        <begin position="252"/>
        <end position="254"/>
    </location>
</feature>
<feature type="strand" evidence="5">
    <location>
        <begin position="256"/>
        <end position="259"/>
    </location>
</feature>
<feature type="helix" evidence="5">
    <location>
        <begin position="273"/>
        <end position="278"/>
    </location>
</feature>
<feature type="turn" evidence="5">
    <location>
        <begin position="279"/>
        <end position="281"/>
    </location>
</feature>
<feature type="helix" evidence="5">
    <location>
        <begin position="286"/>
        <end position="292"/>
    </location>
</feature>
<feature type="strand" evidence="5">
    <location>
        <begin position="299"/>
        <end position="301"/>
    </location>
</feature>
<feature type="turn" evidence="5">
    <location>
        <begin position="308"/>
        <end position="310"/>
    </location>
</feature>
<feature type="helix" evidence="5">
    <location>
        <begin position="313"/>
        <end position="316"/>
    </location>
</feature>
<feature type="helix" evidence="5">
    <location>
        <begin position="323"/>
        <end position="341"/>
    </location>
</feature>
<gene>
    <name type="ORF">CIMG_04084</name>
</gene>
<evidence type="ECO:0000250" key="1"/>
<evidence type="ECO:0000250" key="2">
    <source>
        <dbReference type="UniProtKB" id="P00480"/>
    </source>
</evidence>
<evidence type="ECO:0000255" key="3"/>
<evidence type="ECO:0000305" key="4"/>
<evidence type="ECO:0007829" key="5">
    <source>
        <dbReference type="PDB" id="3SDS"/>
    </source>
</evidence>
<comment type="catalytic activity">
    <reaction>
        <text>carbamoyl phosphate + L-ornithine = L-citrulline + phosphate + H(+)</text>
        <dbReference type="Rhea" id="RHEA:19513"/>
        <dbReference type="ChEBI" id="CHEBI:15378"/>
        <dbReference type="ChEBI" id="CHEBI:43474"/>
        <dbReference type="ChEBI" id="CHEBI:46911"/>
        <dbReference type="ChEBI" id="CHEBI:57743"/>
        <dbReference type="ChEBI" id="CHEBI:58228"/>
        <dbReference type="EC" id="2.1.3.3"/>
    </reaction>
</comment>
<comment type="pathway">
    <text>Amino-acid biosynthesis; L-arginine biosynthesis; L-arginine from L-ornithine and carbamoyl phosphate: step 1/3.</text>
</comment>
<comment type="subunit">
    <text evidence="1">Homotrimer.</text>
</comment>
<comment type="subcellular location">
    <subcellularLocation>
        <location evidence="1">Mitochondrion matrix</location>
    </subcellularLocation>
</comment>
<comment type="similarity">
    <text evidence="4">Belongs to the aspartate/ornithine carbamoyltransferase superfamily. OTCase family.</text>
</comment>
<comment type="sequence caution" evidence="4">
    <conflict type="erroneous initiation">
        <sequence resource="EMBL-CDS" id="EAS33060"/>
    </conflict>
    <text>Extended N-terminus.</text>
</comment>
<name>OTC_COCIM</name>
<protein>
    <recommendedName>
        <fullName>Ornithine carbamoyltransferase, mitochondrial</fullName>
        <ecNumber>2.1.3.3</ecNumber>
    </recommendedName>
    <alternativeName>
        <fullName>Ornithine transcarbamylase</fullName>
        <shortName>OTCase</shortName>
    </alternativeName>
</protein>
<organism>
    <name type="scientific">Coccidioides immitis (strain RS)</name>
    <name type="common">Valley fever fungus</name>
    <dbReference type="NCBI Taxonomy" id="246410"/>
    <lineage>
        <taxon>Eukaryota</taxon>
        <taxon>Fungi</taxon>
        <taxon>Dikarya</taxon>
        <taxon>Ascomycota</taxon>
        <taxon>Pezizomycotina</taxon>
        <taxon>Eurotiomycetes</taxon>
        <taxon>Eurotiomycetidae</taxon>
        <taxon>Onygenales</taxon>
        <taxon>Onygenaceae</taxon>
        <taxon>Coccidioides</taxon>
    </lineage>
</organism>
<accession>P0CL21</accession>
<accession>J3KCR4</accession>
<accession>J3KD67</accession>
<keyword id="KW-0002">3D-structure</keyword>
<keyword id="KW-0028">Amino-acid biosynthesis</keyword>
<keyword id="KW-0055">Arginine biosynthesis</keyword>
<keyword id="KW-0496">Mitochondrion</keyword>
<keyword id="KW-1185">Reference proteome</keyword>
<keyword id="KW-0808">Transferase</keyword>
<keyword id="KW-0809">Transit peptide</keyword>
<dbReference type="EC" id="2.1.3.3"/>
<dbReference type="EMBL" id="GG704916">
    <property type="protein sequence ID" value="EAS33060.3"/>
    <property type="status" value="ALT_INIT"/>
    <property type="molecule type" value="Genomic_DNA"/>
</dbReference>
<dbReference type="RefSeq" id="XP_001244643.2">
    <property type="nucleotide sequence ID" value="XM_001244642.2"/>
</dbReference>
<dbReference type="PDB" id="3SDS">
    <property type="method" value="X-ray"/>
    <property type="resolution" value="2.80 A"/>
    <property type="chains" value="A/B/C=1-349"/>
</dbReference>
<dbReference type="PDBsum" id="3SDS"/>
<dbReference type="SMR" id="P0CL21"/>
<dbReference type="FunCoup" id="P0CL21">
    <property type="interactions" value="607"/>
</dbReference>
<dbReference type="STRING" id="246410.P0CL21"/>
<dbReference type="GeneID" id="4562518"/>
<dbReference type="KEGG" id="cim:CIMG_04084"/>
<dbReference type="InParanoid" id="P0CL21"/>
<dbReference type="OrthoDB" id="10252326at2759"/>
<dbReference type="UniPathway" id="UPA00068">
    <property type="reaction ID" value="UER00112"/>
</dbReference>
<dbReference type="EvolutionaryTrace" id="P0CL21"/>
<dbReference type="Proteomes" id="UP000001261">
    <property type="component" value="Unassembled WGS sequence"/>
</dbReference>
<dbReference type="GO" id="GO:0005759">
    <property type="term" value="C:mitochondrial matrix"/>
    <property type="evidence" value="ECO:0007669"/>
    <property type="project" value="UniProtKB-SubCell"/>
</dbReference>
<dbReference type="GO" id="GO:0016597">
    <property type="term" value="F:amino acid binding"/>
    <property type="evidence" value="ECO:0007669"/>
    <property type="project" value="InterPro"/>
</dbReference>
<dbReference type="GO" id="GO:0004585">
    <property type="term" value="F:ornithine carbamoyltransferase activity"/>
    <property type="evidence" value="ECO:0007669"/>
    <property type="project" value="UniProtKB-EC"/>
</dbReference>
<dbReference type="GO" id="GO:0042450">
    <property type="term" value="P:arginine biosynthetic process via ornithine"/>
    <property type="evidence" value="ECO:0007669"/>
    <property type="project" value="TreeGrafter"/>
</dbReference>
<dbReference type="GO" id="GO:0019240">
    <property type="term" value="P:citrulline biosynthetic process"/>
    <property type="evidence" value="ECO:0007669"/>
    <property type="project" value="TreeGrafter"/>
</dbReference>
<dbReference type="GO" id="GO:0006526">
    <property type="term" value="P:L-arginine biosynthetic process"/>
    <property type="evidence" value="ECO:0007669"/>
    <property type="project" value="UniProtKB-UniPathway"/>
</dbReference>
<dbReference type="FunFam" id="3.40.50.1370:FF:000017">
    <property type="entry name" value="Ornithine carbamoyltransferase"/>
    <property type="match status" value="1"/>
</dbReference>
<dbReference type="FunFam" id="3.40.50.1370:FF:000009">
    <property type="entry name" value="Ornithine carbamoyltransferase, mitochondrial"/>
    <property type="match status" value="1"/>
</dbReference>
<dbReference type="Gene3D" id="3.40.50.1370">
    <property type="entry name" value="Aspartate/ornithine carbamoyltransferase"/>
    <property type="match status" value="2"/>
</dbReference>
<dbReference type="InterPro" id="IPR006132">
    <property type="entry name" value="Asp/Orn_carbamoyltranf_P-bd"/>
</dbReference>
<dbReference type="InterPro" id="IPR006130">
    <property type="entry name" value="Asp/Orn_carbamoylTrfase"/>
</dbReference>
<dbReference type="InterPro" id="IPR036901">
    <property type="entry name" value="Asp/Orn_carbamoylTrfase_sf"/>
</dbReference>
<dbReference type="InterPro" id="IPR006131">
    <property type="entry name" value="Asp_carbamoyltransf_Asp/Orn-bd"/>
</dbReference>
<dbReference type="InterPro" id="IPR002292">
    <property type="entry name" value="Orn/put_carbamltrans"/>
</dbReference>
<dbReference type="NCBIfam" id="TIGR00658">
    <property type="entry name" value="orni_carb_tr"/>
    <property type="match status" value="1"/>
</dbReference>
<dbReference type="NCBIfam" id="NF001986">
    <property type="entry name" value="PRK00779.1"/>
    <property type="match status" value="1"/>
</dbReference>
<dbReference type="PANTHER" id="PTHR45753">
    <property type="entry name" value="ORNITHINE CARBAMOYLTRANSFERASE, MITOCHONDRIAL"/>
    <property type="match status" value="1"/>
</dbReference>
<dbReference type="PANTHER" id="PTHR45753:SF3">
    <property type="entry name" value="ORNITHINE TRANSCARBAMYLASE, MITOCHONDRIAL"/>
    <property type="match status" value="1"/>
</dbReference>
<dbReference type="Pfam" id="PF00185">
    <property type="entry name" value="OTCace"/>
    <property type="match status" value="1"/>
</dbReference>
<dbReference type="Pfam" id="PF02729">
    <property type="entry name" value="OTCace_N"/>
    <property type="match status" value="1"/>
</dbReference>
<dbReference type="PRINTS" id="PR00100">
    <property type="entry name" value="AOTCASE"/>
</dbReference>
<dbReference type="PRINTS" id="PR00102">
    <property type="entry name" value="OTCASE"/>
</dbReference>
<dbReference type="SUPFAM" id="SSF53671">
    <property type="entry name" value="Aspartate/ornithine carbamoyltransferase"/>
    <property type="match status" value="1"/>
</dbReference>
<dbReference type="PROSITE" id="PS00097">
    <property type="entry name" value="CARBAMOYLTRANSFERASE"/>
    <property type="match status" value="1"/>
</dbReference>
<proteinExistence type="evidence at protein level"/>
<sequence>MAKNQWRPYTNGSHAPSTPRHLLSIADLTPTEFATLVRNASSYKKTIKSDSMPERLTGALSGKTVAMMFSKRSTRTRVSTEGAVVKMGGHPMFLGKDDIQLGVNESLYDTSVVISSMVSCIVARVGPHSDIANLAKHSSVPVINALCDTFHPLQAIADFLTIHESFASQSATHGTHPSSLGLEGLKIAWVGDANNVLFDLAIAATKMGVNVAVATPRGYEIPSHIVELIQKAREGVQSPGNLTQTTVPEVAVKDADVIVTDTWISMGQETEKIKRLEAFKDFKVTSELAKRGGAKENWKFMHCLPRHPEEVSDEVFYSERSLVFPEAENRLWAAISALEAFVVNKGKIA</sequence>
<reference key="1">
    <citation type="journal article" date="2009" name="Genome Res.">
        <title>Comparative genomic analyses of the human fungal pathogens Coccidioides and their relatives.</title>
        <authorList>
            <person name="Sharpton T.J."/>
            <person name="Stajich J.E."/>
            <person name="Rounsley S.D."/>
            <person name="Gardner M.J."/>
            <person name="Wortman J.R."/>
            <person name="Jordar V.S."/>
            <person name="Maiti R."/>
            <person name="Kodira C.D."/>
            <person name="Neafsey D.E."/>
            <person name="Zeng Q."/>
            <person name="Hung C.-Y."/>
            <person name="McMahan C."/>
            <person name="Muszewska A."/>
            <person name="Grynberg M."/>
            <person name="Mandel M.A."/>
            <person name="Kellner E.M."/>
            <person name="Barker B.M."/>
            <person name="Galgiani J.N."/>
            <person name="Orbach M.J."/>
            <person name="Kirkland T.N."/>
            <person name="Cole G.T."/>
            <person name="Henn M.R."/>
            <person name="Birren B.W."/>
            <person name="Taylor J.W."/>
        </authorList>
    </citation>
    <scope>NUCLEOTIDE SEQUENCE [LARGE SCALE GENOMIC DNA]</scope>
    <source>
        <strain>RS</strain>
    </source>
</reference>
<reference key="2">
    <citation type="journal article" date="2010" name="Genome Res.">
        <title>Population genomic sequencing of Coccidioides fungi reveals recent hybridization and transposon control.</title>
        <authorList>
            <person name="Neafsey D.E."/>
            <person name="Barker B.M."/>
            <person name="Sharpton T.J."/>
            <person name="Stajich J.E."/>
            <person name="Park D.J."/>
            <person name="Whiston E."/>
            <person name="Hung C.-Y."/>
            <person name="McMahan C."/>
            <person name="White J."/>
            <person name="Sykes S."/>
            <person name="Heiman D."/>
            <person name="Young S."/>
            <person name="Zeng Q."/>
            <person name="Abouelleil A."/>
            <person name="Aftuck L."/>
            <person name="Bessette D."/>
            <person name="Brown A."/>
            <person name="FitzGerald M."/>
            <person name="Lui A."/>
            <person name="Macdonald J.P."/>
            <person name="Priest M."/>
            <person name="Orbach M.J."/>
            <person name="Galgiani J.N."/>
            <person name="Kirkland T.N."/>
            <person name="Cole G.T."/>
            <person name="Birren B.W."/>
            <person name="Henn M.R."/>
            <person name="Taylor J.W."/>
            <person name="Rounsley S.D."/>
        </authorList>
    </citation>
    <scope>GENOME REANNOTATION</scope>
    <source>
        <strain>RS</strain>
    </source>
</reference>
<reference key="3">
    <citation type="submission" date="2011-06" db="PDB data bank">
        <title>Crystal structure of a mitochondrial ornithine carbamoyltransferase from coccidioides immitis.</title>
        <authorList>
            <consortium name="Joint center for structural genomics (JCSG)"/>
        </authorList>
    </citation>
    <scope>X-RAY CRYSTALLOGRAPHY (2.8 ANGSTROMS) OF 1-349</scope>
</reference>